<accession>Q9HY80</accession>
<feature type="chain" id="PRO_0000460760" description="Bacterioferritin-associated ferredoxin">
    <location>
        <begin position="1"/>
        <end position="73"/>
    </location>
</feature>
<feature type="binding site" evidence="4 7 15 16">
    <location>
        <position position="4"/>
    </location>
    <ligand>
        <name>[2Fe-2S] cluster</name>
        <dbReference type="ChEBI" id="CHEBI:190135"/>
    </ligand>
</feature>
<feature type="binding site" evidence="4 7 15 16">
    <location>
        <position position="6"/>
    </location>
    <ligand>
        <name>[2Fe-2S] cluster</name>
        <dbReference type="ChEBI" id="CHEBI:190135"/>
    </ligand>
</feature>
<feature type="binding site" evidence="4 15">
    <location>
        <position position="26"/>
    </location>
    <ligand>
        <name>phosphate</name>
        <dbReference type="ChEBI" id="CHEBI:43474"/>
    </ligand>
</feature>
<feature type="binding site" evidence="4 15">
    <location>
        <position position="29"/>
    </location>
    <ligand>
        <name>phosphate</name>
        <dbReference type="ChEBI" id="CHEBI:43474"/>
    </ligand>
</feature>
<feature type="binding site" evidence="4 7 15 16">
    <location>
        <position position="38"/>
    </location>
    <ligand>
        <name>[2Fe-2S] cluster</name>
        <dbReference type="ChEBI" id="CHEBI:190135"/>
    </ligand>
</feature>
<feature type="binding site" evidence="4 7 15 16">
    <location>
        <position position="41"/>
    </location>
    <ligand>
        <name>[2Fe-2S] cluster</name>
        <dbReference type="ChEBI" id="CHEBI:190135"/>
    </ligand>
</feature>
<feature type="binding site" evidence="4 15">
    <location>
        <position position="46"/>
    </location>
    <ligand>
        <name>phosphate</name>
        <dbReference type="ChEBI" id="CHEBI:43474"/>
    </ligand>
</feature>
<feature type="mutagenesis site" description="Does not bind [2Fe-2S] cluster." evidence="5">
    <original>Y</original>
    <variation>A</variation>
    <location>
        <position position="2"/>
    </location>
</feature>
<feature type="mutagenesis site" description="Wild-type iron release from BfrB, 3-fold decreased affinity for BfrB." evidence="5">
    <original>Y</original>
    <variation>F</variation>
    <location>
        <position position="2"/>
    </location>
</feature>
<feature type="mutagenesis site" description="2-fold decreased iron release from BfrB, 25-fold decreased affinity for BfrB." evidence="5">
    <original>L</original>
    <variation>A</variation>
    <location>
        <position position="5"/>
    </location>
</feature>
<feature type="mutagenesis site" description="No significant change in structure, [2Fe-2S] cluster or iron mobilization from BfrB, in truncated protein. No significant change in structure, [2Fe-2S] cluster or iron mobilization from BfrB, in truncated protein; when associated with Y-46." evidence="7">
    <original>R</original>
    <variation>E</variation>
    <location>
        <position position="26"/>
    </location>
</feature>
<feature type="mutagenesis site" description="Probably unstable, it cannot be overexpressed, in truncated protein." evidence="7">
    <original>R</original>
    <variation>E</variation>
    <location>
        <position position="29"/>
    </location>
</feature>
<feature type="mutagenesis site" description="Wild-type iron release from BfrB, 2-fold decreased affinity for BfrB." evidence="5">
    <original>K</original>
    <variation>A</variation>
    <location>
        <position position="40"/>
    </location>
</feature>
<feature type="mutagenesis site" description="Increases yield of protein and stability of [2Fe-2S] center, no effect on its function." evidence="3 4 7">
    <original>C</original>
    <variation>S</variation>
    <location>
        <position position="43"/>
    </location>
</feature>
<feature type="mutagenesis site" description="Probably unstable, it cannot be overexpressed, in truncated protein." evidence="7">
    <original>K</original>
    <variation>E</variation>
    <location>
        <position position="46"/>
    </location>
</feature>
<feature type="mutagenesis site" description="No significant change in structure, [2Fe-2S] cluster or iron mobilization from BfrB, in truncated protein; when associated with E-26." evidence="7">
    <original>K</original>
    <variation>Y</variation>
    <location>
        <position position="46"/>
    </location>
</feature>
<feature type="mutagenesis site" description="No change in ability to mobilize iron from BfrB." evidence="7">
    <location>
        <begin position="57"/>
        <end position="73"/>
    </location>
</feature>
<feature type="strand" evidence="19">
    <location>
        <begin position="2"/>
        <end position="4"/>
    </location>
</feature>
<feature type="turn" evidence="19">
    <location>
        <begin position="5"/>
        <end position="8"/>
    </location>
</feature>
<feature type="helix" evidence="19">
    <location>
        <begin position="11"/>
        <end position="19"/>
    </location>
</feature>
<feature type="helix" evidence="19">
    <location>
        <begin position="25"/>
        <end position="32"/>
    </location>
</feature>
<feature type="strand" evidence="19">
    <location>
        <begin position="36"/>
        <end position="38"/>
    </location>
</feature>
<feature type="helix" evidence="19">
    <location>
        <begin position="42"/>
        <end position="54"/>
    </location>
</feature>
<comment type="function">
    <text evidence="3 4 5 6 7 12">Required for mobilization of iron from the bacterioferritin (BFR) complex, composed of BfrB and FtnA in varying proportions; mobilization requires the [2Fe-2S] cluster of this protein (PubMed:19575528, PubMed:22812654, PubMed:26368531, PubMed:28318006, PubMed:30183257). Reduction of the BfrB heme group occurs in the presence of Bfd, strongly suggesting that the BfrB-Bfd complex allows heme to mediate electron transfer from FPR to the Fe(3+) iron core in the BFR prior to its release as Fe(2+) (PubMed:19575528, PubMed:22812654).</text>
</comment>
<comment type="cofactor">
    <cofactor evidence="2 3 4 7">
        <name>[2Fe-2S] cluster</name>
        <dbReference type="ChEBI" id="CHEBI:190135"/>
    </cofactor>
</comment>
<comment type="cofactor">
    <cofactor evidence="4">
        <name>phosphate</name>
        <dbReference type="ChEBI" id="CHEBI:43474"/>
    </cofactor>
    <text evidence="4 7">A phosphate ion (or another anion) stabilizes the protein fold and the [2Fe-2S] cluster (PubMed:22812654, PubMed:30183257).</text>
</comment>
<comment type="subunit">
    <text evidence="3 4 5 8 13">Monomer (Probable) (PubMed:30183257). Interacts with BfrB; up to 12 Bfd proteins can bind to the BfrB bacterioferritin complex (BFR) (PubMed:19575528, PubMed:22812654, PubMed:26368531, PubMed:35327558). One Bfd protein binds to a BfrB dimer in the BFR, with the [2Fe-2S] cluster positioned about 22 Angstroms above the heme of BfrB (PubMed:22812654). Does not interact with FtnA (PubMed:35327558).</text>
</comment>
<comment type="induction">
    <text evidence="1">Increased transcription under iron starvation (PubMed:12207696).</text>
</comment>
<comment type="domain">
    <text evidence="7">The C-terminal 17 residues are not required for [2Fe-2S] cluster assembly, interaction with the BfrB bacterioferritin complex (BFR) or iron mobilization from the BfrB core (PubMed:30183257).</text>
</comment>
<comment type="disruption phenotype">
    <text evidence="6">No growth phenotype in iron-sufficient conditions, in low iron conditions iron accumulates in BFR composed only of BfrB, the iron is not mobilizable, increased secretion of pyoverdin siderophore (PubMed:28318006).</text>
</comment>
<comment type="similarity">
    <text evidence="11">Belongs to the Bfd family.</text>
</comment>
<comment type="caution">
    <text evidence="3 4">Was originally thought to not require the [2Fe-2S] cluster for iron mobilization from BfrB (PubMed:19575528). Subsequent experiments show the [2Fe-2S] cluster is necessary (PubMed:22812654).</text>
</comment>
<dbReference type="EMBL" id="AE004091">
    <property type="protein sequence ID" value="AAG06918.1"/>
    <property type="molecule type" value="Genomic_DNA"/>
</dbReference>
<dbReference type="PIR" id="H83204">
    <property type="entry name" value="H83204"/>
</dbReference>
<dbReference type="RefSeq" id="NP_252220.1">
    <property type="nucleotide sequence ID" value="NC_002516.2"/>
</dbReference>
<dbReference type="RefSeq" id="WP_003092075.1">
    <property type="nucleotide sequence ID" value="NZ_QZGE01000001.1"/>
</dbReference>
<dbReference type="PDB" id="4E6K">
    <property type="method" value="X-ray"/>
    <property type="resolution" value="2.00 A"/>
    <property type="chains" value="G/H/I=1-73"/>
</dbReference>
<dbReference type="PDB" id="6E6Q">
    <property type="method" value="X-ray"/>
    <property type="resolution" value="1.20 A"/>
    <property type="chains" value="A/B=1-56"/>
</dbReference>
<dbReference type="PDB" id="6E6R">
    <property type="method" value="X-ray"/>
    <property type="resolution" value="1.50 A"/>
    <property type="chains" value="A=1-56"/>
</dbReference>
<dbReference type="PDB" id="6E6S">
    <property type="method" value="X-ray"/>
    <property type="resolution" value="1.45 A"/>
    <property type="chains" value="A/B=1-56"/>
</dbReference>
<dbReference type="PDBsum" id="4E6K"/>
<dbReference type="PDBsum" id="6E6Q"/>
<dbReference type="PDBsum" id="6E6R"/>
<dbReference type="PDBsum" id="6E6S"/>
<dbReference type="SMR" id="Q9HY80"/>
<dbReference type="FunCoup" id="Q9HY80">
    <property type="interactions" value="30"/>
</dbReference>
<dbReference type="STRING" id="208964.PA3530"/>
<dbReference type="PaxDb" id="208964-PA3530"/>
<dbReference type="DNASU" id="879943"/>
<dbReference type="GeneID" id="879943"/>
<dbReference type="KEGG" id="pae:PA3530"/>
<dbReference type="PATRIC" id="fig|208964.12.peg.3694"/>
<dbReference type="PseudoCAP" id="PA3530"/>
<dbReference type="HOGENOM" id="CLU_159205_3_0_6"/>
<dbReference type="InParanoid" id="Q9HY80"/>
<dbReference type="OrthoDB" id="9815350at2"/>
<dbReference type="PhylomeDB" id="Q9HY80"/>
<dbReference type="BioCyc" id="PAER208964:G1FZ6-3598-MONOMER"/>
<dbReference type="Proteomes" id="UP000002438">
    <property type="component" value="Chromosome"/>
</dbReference>
<dbReference type="GO" id="GO:0051537">
    <property type="term" value="F:2 iron, 2 sulfur cluster binding"/>
    <property type="evidence" value="ECO:0000314"/>
    <property type="project" value="PseudoCAP"/>
</dbReference>
<dbReference type="GO" id="GO:0046872">
    <property type="term" value="F:metal ion binding"/>
    <property type="evidence" value="ECO:0007669"/>
    <property type="project" value="UniProtKB-KW"/>
</dbReference>
<dbReference type="CDD" id="cd19945">
    <property type="entry name" value="Fer2_BFD"/>
    <property type="match status" value="1"/>
</dbReference>
<dbReference type="FunFam" id="1.10.10.1100:FF:000007">
    <property type="entry name" value="(2Fe-2S)-binding protein"/>
    <property type="match status" value="1"/>
</dbReference>
<dbReference type="Gene3D" id="1.10.10.1100">
    <property type="entry name" value="BFD-like [2Fe-2S]-binding domain"/>
    <property type="match status" value="1"/>
</dbReference>
<dbReference type="InterPro" id="IPR052371">
    <property type="entry name" value="BFD-associated_ferredoxin"/>
</dbReference>
<dbReference type="InterPro" id="IPR007419">
    <property type="entry name" value="BFD-like_2Fe2S-bd_dom"/>
</dbReference>
<dbReference type="InterPro" id="IPR041854">
    <property type="entry name" value="BFD-like_2Fe2S-bd_dom_sf"/>
</dbReference>
<dbReference type="PANTHER" id="PTHR37424">
    <property type="entry name" value="BACTERIOFERRITIN-ASSOCIATED FERREDOXIN"/>
    <property type="match status" value="1"/>
</dbReference>
<dbReference type="PANTHER" id="PTHR37424:SF1">
    <property type="entry name" value="BACTERIOFERRITIN-ASSOCIATED FERREDOXIN"/>
    <property type="match status" value="1"/>
</dbReference>
<dbReference type="Pfam" id="PF04324">
    <property type="entry name" value="Fer2_BFD"/>
    <property type="match status" value="1"/>
</dbReference>
<evidence type="ECO:0000269" key="1">
    <source>
    </source>
</evidence>
<evidence type="ECO:0000269" key="2">
    <source>
    </source>
</evidence>
<evidence type="ECO:0000269" key="3">
    <source>
    </source>
</evidence>
<evidence type="ECO:0000269" key="4">
    <source>
    </source>
</evidence>
<evidence type="ECO:0000269" key="5">
    <source>
    </source>
</evidence>
<evidence type="ECO:0000269" key="6">
    <source>
    </source>
</evidence>
<evidence type="ECO:0000269" key="7">
    <source>
    </source>
</evidence>
<evidence type="ECO:0000269" key="8">
    <source>
    </source>
</evidence>
<evidence type="ECO:0000303" key="9">
    <source>
    </source>
</evidence>
<evidence type="ECO:0000303" key="10">
    <source>
    </source>
</evidence>
<evidence type="ECO:0000305" key="11"/>
<evidence type="ECO:0000305" key="12">
    <source>
    </source>
</evidence>
<evidence type="ECO:0000305" key="13">
    <source>
    </source>
</evidence>
<evidence type="ECO:0000312" key="14">
    <source>
        <dbReference type="EMBL" id="AAG06918.1"/>
    </source>
</evidence>
<evidence type="ECO:0007744" key="15">
    <source>
        <dbReference type="PDB" id="4E6K"/>
    </source>
</evidence>
<evidence type="ECO:0007744" key="16">
    <source>
        <dbReference type="PDB" id="6E6Q"/>
    </source>
</evidence>
<evidence type="ECO:0007744" key="17">
    <source>
        <dbReference type="PDB" id="6E6R"/>
    </source>
</evidence>
<evidence type="ECO:0007744" key="18">
    <source>
        <dbReference type="PDB" id="6E6S"/>
    </source>
</evidence>
<evidence type="ECO:0007829" key="19">
    <source>
        <dbReference type="PDB" id="6E6Q"/>
    </source>
</evidence>
<protein>
    <recommendedName>
        <fullName evidence="10">Bacterioferritin-associated ferredoxin</fullName>
        <shortName evidence="10">Bfd</shortName>
    </recommendedName>
</protein>
<sequence length="73" mass="7824">MYVCLCQGVTDNQIRDAIYEGCCSYREVREATGVGTQCGKCACLAKQVVRETLNDLQSAQPVPAFGTTAFVAA</sequence>
<organism>
    <name type="scientific">Pseudomonas aeruginosa (strain ATCC 15692 / DSM 22644 / CIP 104116 / JCM 14847 / LMG 12228 / 1C / PRS 101 / PAO1)</name>
    <dbReference type="NCBI Taxonomy" id="208964"/>
    <lineage>
        <taxon>Bacteria</taxon>
        <taxon>Pseudomonadati</taxon>
        <taxon>Pseudomonadota</taxon>
        <taxon>Gammaproteobacteria</taxon>
        <taxon>Pseudomonadales</taxon>
        <taxon>Pseudomonadaceae</taxon>
        <taxon>Pseudomonas</taxon>
    </lineage>
</organism>
<proteinExistence type="evidence at protein level"/>
<gene>
    <name evidence="9" type="primary">bfd</name>
    <name evidence="14" type="ordered locus">PA3530</name>
</gene>
<keyword id="KW-0001">2Fe-2S</keyword>
<keyword id="KW-0002">3D-structure</keyword>
<keyword id="KW-0249">Electron transport</keyword>
<keyword id="KW-0408">Iron</keyword>
<keyword id="KW-0411">Iron-sulfur</keyword>
<keyword id="KW-0479">Metal-binding</keyword>
<keyword id="KW-1185">Reference proteome</keyword>
<keyword id="KW-0813">Transport</keyword>
<reference evidence="14" key="1">
    <citation type="journal article" date="2000" name="Nature">
        <title>Complete genome sequence of Pseudomonas aeruginosa PAO1, an opportunistic pathogen.</title>
        <authorList>
            <person name="Stover C.K."/>
            <person name="Pham X.-Q.T."/>
            <person name="Erwin A.L."/>
            <person name="Mizoguchi S.D."/>
            <person name="Warrener P."/>
            <person name="Hickey M.J."/>
            <person name="Brinkman F.S.L."/>
            <person name="Hufnagle W.O."/>
            <person name="Kowalik D.J."/>
            <person name="Lagrou M."/>
            <person name="Garber R.L."/>
            <person name="Goltry L."/>
            <person name="Tolentino E."/>
            <person name="Westbrock-Wadman S."/>
            <person name="Yuan Y."/>
            <person name="Brody L.L."/>
            <person name="Coulter S.N."/>
            <person name="Folger K.R."/>
            <person name="Kas A."/>
            <person name="Larbig K."/>
            <person name="Lim R.M."/>
            <person name="Smith K.A."/>
            <person name="Spencer D.H."/>
            <person name="Wong G.K.-S."/>
            <person name="Wu Z."/>
            <person name="Paulsen I.T."/>
            <person name="Reizer J."/>
            <person name="Saier M.H. Jr."/>
            <person name="Hancock R.E.W."/>
            <person name="Lory S."/>
            <person name="Olson M.V."/>
        </authorList>
    </citation>
    <scope>NUCLEOTIDE SEQUENCE [LARGE SCALE GENOMIC DNA]</scope>
    <source>
        <strain>ATCC 15692 / DSM 22644 / CIP 104116 / JCM 14847 / LMG 12228 / 1C / PRS 101 / PAO1</strain>
    </source>
</reference>
<reference key="2">
    <citation type="journal article" date="2002" name="Mol. Microbiol.">
        <title>GeneChip expression analysis of the iron starvation response in Pseudomonas aeruginosa: identification of novel pyoverdine biosynthesis genes.</title>
        <authorList>
            <person name="Ochsner U.A."/>
            <person name="Wilderman P.J."/>
            <person name="Vasil A.I."/>
            <person name="Vasil M.L."/>
        </authorList>
    </citation>
    <scope>INDUCTION BY IRON STARVATION</scope>
    <source>
        <strain>ATCC 15692 / DSM 22644 / CIP 104116 / JCM 14847 / LMG 12228 / 1C / PRS 101 / PAO1</strain>
    </source>
</reference>
<reference key="3">
    <citation type="journal article" date="2007" name="Biochemistry">
        <title>Biochemical and structural characterization of Pseudomonas aeruginosa Bfd and FPR: ferredoxin NADP+ reductase and not ferredoxin is the redox partner of heme oxygenase under iron-starvation conditions.</title>
        <authorList>
            <person name="Wang A."/>
            <person name="Zeng Y."/>
            <person name="Han H."/>
            <person name="Weeratunga S."/>
            <person name="Morgan B.N."/>
            <person name="Moenne-Loccoz P."/>
            <person name="Schonbrunn E."/>
            <person name="Rivera M."/>
        </authorList>
    </citation>
    <scope>[2FE-2S] COFACTOR</scope>
</reference>
<reference key="4">
    <citation type="journal article" date="2009" name="Biochemistry">
        <title>Binding of Pseudomonas aeruginosa apobacterioferritin-associated ferredoxin to bacterioferritin B promotes heme mediation of electron delivery and mobilization of core mineral iron.</title>
        <authorList>
            <person name="Weeratunga S.K."/>
            <person name="Gee C.E."/>
            <person name="Lovell S."/>
            <person name="Zeng Y."/>
            <person name="Woodin C.L."/>
            <person name="Rivera M."/>
        </authorList>
    </citation>
    <scope>FUNCTION</scope>
    <scope>[2FE-2S] COFACTOR</scope>
    <scope>INTERACTION WITH BFRB</scope>
    <scope>MUTAGENESIS OF CYS-43</scope>
</reference>
<reference key="5">
    <citation type="journal article" date="2015" name="Biochemistry">
        <title>Characterization of the Bacterioferritin/Bacterioferritin Associated Ferredoxin Protein-Protein Interaction in Solution and Determination of Binding Energy Hot Spots.</title>
        <authorList>
            <person name="Wang Y."/>
            <person name="Yao H."/>
            <person name="Cheng Y."/>
            <person name="Lovell S."/>
            <person name="Battaile K.P."/>
            <person name="Midaugh C.R."/>
            <person name="Rivera M."/>
        </authorList>
    </citation>
    <scope>FUNCTION</scope>
    <scope>INTERACTION WITH BFRB</scope>
    <scope>MUTAGENESIS OF TYR-2; LEU-5 AND LYS-40</scope>
</reference>
<reference key="6">
    <citation type="journal article" date="2017" name="Metallomics">
        <title>Inhibiting the BfrB:Bfd interaction in Pseudomonas aeruginosa causes irreversible iron accumulation in bacterioferritin and iron deficiency in the bacterial cytosol.</title>
        <authorList>
            <person name="Eshelman K."/>
            <person name="Yao H."/>
            <person name="Punchi Hewage A.N.D."/>
            <person name="Deay J.J."/>
            <person name="Chandler J.R."/>
            <person name="Rivera M."/>
        </authorList>
    </citation>
    <scope>FUNCTION</scope>
    <scope>DISRUPTION PHENOTYPE</scope>
    <source>
        <strain>ATCC 15692 / DSM 22644 / CIP 104116 / JCM 14847 / LMG 12228 / 1C / PRS 101 / PAO1</strain>
    </source>
</reference>
<reference key="7">
    <citation type="journal article" date="2022" name="Biomolecules">
        <title>Pseudomonas aeruginosa Bacterioferritin Is Assembled from FtnA and BfrB Subunits with the Relative Proportions Dependent on the Environmental Oxygen Availability.</title>
        <authorList>
            <person name="Yao H."/>
            <person name="Soldano A."/>
            <person name="Fontenot L."/>
            <person name="Donnarumma F."/>
            <person name="Lovell S."/>
            <person name="Chandler J.R."/>
            <person name="Rivera M."/>
        </authorList>
    </citation>
    <scope>INTERACTION WITH BFRB</scope>
    <scope>DOES NOT INTERACT WITH FTNA</scope>
    <source>
        <strain>ATCC 15692 / DSM 22644 / CIP 104116 / JCM 14847 / LMG 12228 / 1C / PRS 101 / PAO1</strain>
    </source>
</reference>
<reference evidence="15" key="8">
    <citation type="journal article" date="2012" name="J. Am. Chem. Soc.">
        <title>The structure of the BfrB-Bfd complex reveals protein-protein interactions enabling iron release from bacterioferritin.</title>
        <authorList>
            <person name="Yao H."/>
            <person name="Wang Y."/>
            <person name="Lovell S."/>
            <person name="Kumar R."/>
            <person name="Ruvinsky A.M."/>
            <person name="Battaile K.P."/>
            <person name="Vakser I.A."/>
            <person name="Rivera M."/>
        </authorList>
    </citation>
    <scope>X-RAY CRYSTALLOGRAPHY (2.00 ANGSTROMS) IN COMPLEX WITH [2FE-2S] CLUSTER AND BFRB</scope>
    <scope>FUNCTION</scope>
    <scope>[2FE-2S] COFACTOR</scope>
    <scope>PHOSPHATE COFACTOR</scope>
    <scope>SUBUNIT</scope>
    <scope>MUTAGENESIS OF CYS-43</scope>
</reference>
<reference evidence="16 17 18" key="9">
    <citation type="journal article" date="2018" name="Biochemistry">
        <title>Bfd, a New Class of [2Fe-2S] Protein That Functions in Bacterial Iron Homeostasis, Requires a Structural Anion Binding Site.</title>
        <authorList>
            <person name="Wijerathne H."/>
            <person name="Yao H."/>
            <person name="Wang Y."/>
            <person name="Lovell S."/>
            <person name="Battaile K.P."/>
            <person name="Rivera M."/>
        </authorList>
    </citation>
    <scope>X-RAY CRYSTALLOGRAPHY (1.20 ANGSTROMS) OF 1-56 IN COMPLEX WITH [2FE-2S] CLUSTER</scope>
    <scope>FUNCTION</scope>
    <scope>[2FE-2S] COFACTOR</scope>
    <scope>ANION COFACTOR</scope>
    <scope>SUBUNIT</scope>
    <scope>DOMAIN</scope>
    <scope>MUTAGENESIS OF ARG-26; ARG-29; CYS-43; LYS-46 AND 57-GLN--ALA-73</scope>
</reference>
<name>BFD_PSEAE</name>